<protein>
    <recommendedName>
        <fullName>Aromatic-amino-acid aminotransferase 2</fullName>
        <shortName>ARAT-II</shortName>
        <shortName>AROAT</shortName>
        <ecNumber>2.6.1.57</ecNumber>
    </recommendedName>
</protein>
<comment type="function">
    <text evidence="2">Catalyzes the transamination of phenylalanine, tyrosine and tryptophan. Shows virtually no activity towards aspartic acid, alanine, valine or isoleucine.</text>
</comment>
<comment type="catalytic activity">
    <reaction evidence="2">
        <text>an aromatic L-alpha-amino acid + 2-oxoglutarate = an aromatic oxo-acid + L-glutamate</text>
        <dbReference type="Rhea" id="RHEA:17533"/>
        <dbReference type="ChEBI" id="CHEBI:16810"/>
        <dbReference type="ChEBI" id="CHEBI:29985"/>
        <dbReference type="ChEBI" id="CHEBI:73309"/>
        <dbReference type="ChEBI" id="CHEBI:84824"/>
        <dbReference type="EC" id="2.6.1.57"/>
    </reaction>
</comment>
<comment type="cofactor">
    <cofactor evidence="4">
        <name>pyridoxal 5'-phosphate</name>
        <dbReference type="ChEBI" id="CHEBI:597326"/>
    </cofactor>
</comment>
<comment type="biophysicochemical properties">
    <kinetics>
        <KM evidence="2">1.55 mM for phenylalanine</KM>
        <KM evidence="2">2.37 mM for tyrosine</KM>
        <KM evidence="2">4.62 mM for tryptophan</KM>
        <KM evidence="2">0.49 mM for 2-oxoglutarate</KM>
    </kinetics>
    <temperatureDependence>
        <text evidence="2">Optimum temperature is 95-100 degrees Celsius.</text>
    </temperatureDependence>
</comment>
<comment type="subunit">
    <text evidence="2">Homodimer.</text>
</comment>
<comment type="similarity">
    <text evidence="3">Belongs to the class-I pyridoxal-phosphate-dependent aminotransferase family.</text>
</comment>
<sequence length="389" mass="44105">MALSDRLEMVNPSEIRKLFDLAQGIEGIISLGIGEPDFDTPEHIKEYAKEALDKGLTHYSPNIGILELREAVAEKFKKHNGIDADPKTQIMITVGTNQQILMGLATFLKDNEEVLIPSPMFVSYAPAVILAGGKPVEVPTYEENEFRLSVDELEKYVTPKTRALIINTPNNPTGAVLTKKDLEEIADFAVEHDLMILSDEVYEYFVYDGVKNYSIASLDGMFERTITMNGFSKTFAMTGWRLGFLAAPEWVVEKMVRFQMYNATCPVTFIQYAAAKALRDERSWQAVEEMRREYERRRNLVWKRLNEMGLPTVKPKGAFYIFPRIKDTGLSSKEFSELMIKEAKVVVVPGSAFGQAGEGYVRISYATAYEKLEEAMDRMEKVLKEKKLV</sequence>
<proteinExistence type="evidence at protein level"/>
<gene>
    <name type="ORF">OCC_04737</name>
</gene>
<accession>H3ZPU1</accession>
<accession>Q9UWK8</accession>
<feature type="chain" id="PRO_0000429270" description="Aromatic-amino-acid aminotransferase 2">
    <location>
        <begin position="1"/>
        <end position="389"/>
    </location>
</feature>
<feature type="modified residue" description="N6-(pyridoxal phosphate)lysine" evidence="1">
    <location>
        <position position="233"/>
    </location>
</feature>
<feature type="sequence conflict" description="In Ref. 2; AA sequence." evidence="3" ref="2">
    <original>A</original>
    <variation>N</variation>
    <location>
        <position position="2"/>
    </location>
</feature>
<feature type="sequence conflict" description="In Ref. 2; AA sequence." evidence="3" ref="2">
    <original>R</original>
    <variation>A</variation>
    <location>
        <position position="6"/>
    </location>
</feature>
<feature type="sequence conflict" description="In Ref. 2; AA sequence." evidence="3" ref="2">
    <original>EIR</original>
    <variation>WIA</variation>
    <location>
        <begin position="14"/>
        <end position="16"/>
    </location>
</feature>
<dbReference type="EC" id="2.6.1.57"/>
<dbReference type="EMBL" id="CP006670">
    <property type="protein sequence ID" value="EHR77995.1"/>
    <property type="molecule type" value="Genomic_DNA"/>
</dbReference>
<dbReference type="PIR" id="S42364">
    <property type="entry name" value="S42364"/>
</dbReference>
<dbReference type="RefSeq" id="WP_004069212.1">
    <property type="nucleotide sequence ID" value="NC_022084.1"/>
</dbReference>
<dbReference type="SMR" id="H3ZPU1"/>
<dbReference type="STRING" id="523849.OCC_04737"/>
<dbReference type="PaxDb" id="523849-OCC_04737"/>
<dbReference type="GeneID" id="16550508"/>
<dbReference type="KEGG" id="tlt:OCC_04737"/>
<dbReference type="HOGENOM" id="CLU_017584_4_3_2"/>
<dbReference type="OrthoDB" id="372018at2157"/>
<dbReference type="Proteomes" id="UP000015502">
    <property type="component" value="Chromosome"/>
</dbReference>
<dbReference type="GO" id="GO:0008793">
    <property type="term" value="F:aromatic-amino-acid transaminase activity"/>
    <property type="evidence" value="ECO:0007669"/>
    <property type="project" value="RHEA"/>
</dbReference>
<dbReference type="GO" id="GO:0030170">
    <property type="term" value="F:pyridoxal phosphate binding"/>
    <property type="evidence" value="ECO:0007669"/>
    <property type="project" value="InterPro"/>
</dbReference>
<dbReference type="GO" id="GO:0006520">
    <property type="term" value="P:amino acid metabolic process"/>
    <property type="evidence" value="ECO:0007669"/>
    <property type="project" value="InterPro"/>
</dbReference>
<dbReference type="GO" id="GO:0009058">
    <property type="term" value="P:biosynthetic process"/>
    <property type="evidence" value="ECO:0007669"/>
    <property type="project" value="InterPro"/>
</dbReference>
<dbReference type="CDD" id="cd00609">
    <property type="entry name" value="AAT_like"/>
    <property type="match status" value="1"/>
</dbReference>
<dbReference type="FunFam" id="3.40.640.10:FF:000033">
    <property type="entry name" value="Aspartate aminotransferase"/>
    <property type="match status" value="1"/>
</dbReference>
<dbReference type="Gene3D" id="3.90.1150.10">
    <property type="entry name" value="Aspartate Aminotransferase, domain 1"/>
    <property type="match status" value="1"/>
</dbReference>
<dbReference type="Gene3D" id="3.40.640.10">
    <property type="entry name" value="Type I PLP-dependent aspartate aminotransferase-like (Major domain)"/>
    <property type="match status" value="1"/>
</dbReference>
<dbReference type="InterPro" id="IPR004839">
    <property type="entry name" value="Aminotransferase_I/II_large"/>
</dbReference>
<dbReference type="InterPro" id="IPR050596">
    <property type="entry name" value="AspAT/PAT-like"/>
</dbReference>
<dbReference type="InterPro" id="IPR004838">
    <property type="entry name" value="NHTrfase_class1_PyrdxlP-BS"/>
</dbReference>
<dbReference type="InterPro" id="IPR015424">
    <property type="entry name" value="PyrdxlP-dep_Trfase"/>
</dbReference>
<dbReference type="InterPro" id="IPR015421">
    <property type="entry name" value="PyrdxlP-dep_Trfase_major"/>
</dbReference>
<dbReference type="InterPro" id="IPR015422">
    <property type="entry name" value="PyrdxlP-dep_Trfase_small"/>
</dbReference>
<dbReference type="PANTHER" id="PTHR46383">
    <property type="entry name" value="ASPARTATE AMINOTRANSFERASE"/>
    <property type="match status" value="1"/>
</dbReference>
<dbReference type="PANTHER" id="PTHR46383:SF3">
    <property type="entry name" value="ASPARTATE AMINOTRANSFERASE-RELATED"/>
    <property type="match status" value="1"/>
</dbReference>
<dbReference type="Pfam" id="PF00155">
    <property type="entry name" value="Aminotran_1_2"/>
    <property type="match status" value="1"/>
</dbReference>
<dbReference type="SUPFAM" id="SSF53383">
    <property type="entry name" value="PLP-dependent transferases"/>
    <property type="match status" value="1"/>
</dbReference>
<dbReference type="PROSITE" id="PS00105">
    <property type="entry name" value="AA_TRANSFER_CLASS_1"/>
    <property type="match status" value="1"/>
</dbReference>
<keyword id="KW-0032">Aminotransferase</keyword>
<keyword id="KW-0903">Direct protein sequencing</keyword>
<keyword id="KW-0663">Pyridoxal phosphate</keyword>
<keyword id="KW-0808">Transferase</keyword>
<name>ARAT2_THELN</name>
<evidence type="ECO:0000250" key="1"/>
<evidence type="ECO:0000269" key="2">
    <source>
    </source>
</evidence>
<evidence type="ECO:0000305" key="3"/>
<evidence type="ECO:0000305" key="4">
    <source>
    </source>
</evidence>
<organism>
    <name type="scientific">Thermococcus litoralis (strain ATCC 51850 / DSM 5473 / JCM 8560 / NS-C)</name>
    <dbReference type="NCBI Taxonomy" id="523849"/>
    <lineage>
        <taxon>Archaea</taxon>
        <taxon>Methanobacteriati</taxon>
        <taxon>Methanobacteriota</taxon>
        <taxon>Thermococci</taxon>
        <taxon>Thermococcales</taxon>
        <taxon>Thermococcaceae</taxon>
        <taxon>Thermococcus</taxon>
    </lineage>
</organism>
<reference key="1">
    <citation type="journal article" date="2012" name="J. Bacteriol.">
        <title>Genome sequence of the model hyperthermophilic archaeon Thermococcus litoralis NS-C.</title>
        <authorList>
            <person name="Gardner A.F."/>
            <person name="Kumar S."/>
            <person name="Perler F.B."/>
        </authorList>
    </citation>
    <scope>NUCLEOTIDE SEQUENCE [LARGE SCALE GENOMIC DNA]</scope>
    <source>
        <strain>ATCC 51850 / DSM 5473 / JCM 8560 / NS-C</strain>
    </source>
</reference>
<reference key="2">
    <citation type="journal article" date="1994" name="Eur. J. Biochem.">
        <title>Characterization of aromatic aminotransferases from the hyperthermophilic archaeon Thermococcus litoralis.</title>
        <authorList>
            <person name="Andreotti G."/>
            <person name="Cubellis M.V."/>
            <person name="Nitti G."/>
            <person name="Sannia G."/>
            <person name="Mai X."/>
            <person name="Marino G."/>
            <person name="Adams M.W."/>
        </authorList>
    </citation>
    <scope>PROTEIN SEQUENCE OF 2-31</scope>
    <scope>FUNCTION</scope>
    <scope>CATALYTIC ACTIVITY</scope>
    <scope>COFACTOR</scope>
    <scope>BIOPHYSICOCHEMICAL PROPERTIES</scope>
    <scope>SUBUNIT</scope>
    <source>
        <strain>ATCC 51850 / DSM 5473 / JCM 8560 / NS-C</strain>
    </source>
</reference>